<accession>Q0HGX7</accession>
<name>Y2619_SHESM</name>
<evidence type="ECO:0000255" key="1">
    <source>
        <dbReference type="HAMAP-Rule" id="MF_01561"/>
    </source>
</evidence>
<feature type="chain" id="PRO_1000069031" description="Probable phosphatase Shewmr4_2619">
    <location>
        <begin position="1"/>
        <end position="252"/>
    </location>
</feature>
<feature type="binding site" evidence="1">
    <location>
        <position position="8"/>
    </location>
    <ligand>
        <name>Zn(2+)</name>
        <dbReference type="ChEBI" id="CHEBI:29105"/>
        <label>1</label>
    </ligand>
</feature>
<feature type="binding site" evidence="1">
    <location>
        <position position="10"/>
    </location>
    <ligand>
        <name>Zn(2+)</name>
        <dbReference type="ChEBI" id="CHEBI:29105"/>
        <label>1</label>
    </ligand>
</feature>
<feature type="binding site" evidence="1">
    <location>
        <position position="16"/>
    </location>
    <ligand>
        <name>Zn(2+)</name>
        <dbReference type="ChEBI" id="CHEBI:29105"/>
        <label>2</label>
    </ligand>
</feature>
<feature type="binding site" evidence="1">
    <location>
        <position position="41"/>
    </location>
    <ligand>
        <name>Zn(2+)</name>
        <dbReference type="ChEBI" id="CHEBI:29105"/>
        <label>2</label>
    </ligand>
</feature>
<feature type="binding site" evidence="1">
    <location>
        <position position="74"/>
    </location>
    <ligand>
        <name>Zn(2+)</name>
        <dbReference type="ChEBI" id="CHEBI:29105"/>
        <label>1</label>
    </ligand>
</feature>
<feature type="binding site" evidence="1">
    <location>
        <position position="74"/>
    </location>
    <ligand>
        <name>Zn(2+)</name>
        <dbReference type="ChEBI" id="CHEBI:29105"/>
        <label>3</label>
    </ligand>
</feature>
<feature type="binding site" evidence="1">
    <location>
        <position position="102"/>
    </location>
    <ligand>
        <name>Zn(2+)</name>
        <dbReference type="ChEBI" id="CHEBI:29105"/>
        <label>3</label>
    </ligand>
</feature>
<feature type="binding site" evidence="1">
    <location>
        <position position="132"/>
    </location>
    <ligand>
        <name>Zn(2+)</name>
        <dbReference type="ChEBI" id="CHEBI:29105"/>
        <label>3</label>
    </ligand>
</feature>
<feature type="binding site" evidence="1">
    <location>
        <position position="193"/>
    </location>
    <ligand>
        <name>Zn(2+)</name>
        <dbReference type="ChEBI" id="CHEBI:29105"/>
        <label>1</label>
    </ligand>
</feature>
<feature type="binding site" evidence="1">
    <location>
        <position position="195"/>
    </location>
    <ligand>
        <name>Zn(2+)</name>
        <dbReference type="ChEBI" id="CHEBI:29105"/>
        <label>2</label>
    </ligand>
</feature>
<sequence length="252" mass="27255">MQYPVDTHTHTVASTHAYSTIHDYLAVAKQKGIRLFATTDHGPAMADAPHFWHFVNLRVLPRMVDGVGILRGIEANIKNREGEIDYFGDYLSQLDIVLAGFHEPVFPPSDKATHTEAMINAIKSGKVDIITHPGNPAYPIDIEAVAAAAAEYGVALEINNSSFEVSRKGSEANCTAIAKAAKELGATLVMGSDSHVAFSLGGFDRALSIIEAVDYPKDKLLNRSPMALLNFLAQRGHKSVADLMPLFSDDIA</sequence>
<dbReference type="EC" id="3.1.3.-" evidence="1"/>
<dbReference type="EMBL" id="CP000446">
    <property type="protein sequence ID" value="ABI39690.1"/>
    <property type="molecule type" value="Genomic_DNA"/>
</dbReference>
<dbReference type="RefSeq" id="WP_011623371.1">
    <property type="nucleotide sequence ID" value="NC_008321.1"/>
</dbReference>
<dbReference type="SMR" id="Q0HGX7"/>
<dbReference type="KEGG" id="she:Shewmr4_2619"/>
<dbReference type="HOGENOM" id="CLU_061999_0_1_6"/>
<dbReference type="GO" id="GO:0005829">
    <property type="term" value="C:cytosol"/>
    <property type="evidence" value="ECO:0007669"/>
    <property type="project" value="TreeGrafter"/>
</dbReference>
<dbReference type="GO" id="GO:0016791">
    <property type="term" value="F:phosphatase activity"/>
    <property type="evidence" value="ECO:0007669"/>
    <property type="project" value="UniProtKB-UniRule"/>
</dbReference>
<dbReference type="GO" id="GO:0008270">
    <property type="term" value="F:zinc ion binding"/>
    <property type="evidence" value="ECO:0007669"/>
    <property type="project" value="UniProtKB-UniRule"/>
</dbReference>
<dbReference type="GO" id="GO:0071978">
    <property type="term" value="P:bacterial-type flagellum-dependent swarming motility"/>
    <property type="evidence" value="ECO:0007669"/>
    <property type="project" value="TreeGrafter"/>
</dbReference>
<dbReference type="CDD" id="cd07437">
    <property type="entry name" value="PHP_HisPPase_Ycdx_like"/>
    <property type="match status" value="1"/>
</dbReference>
<dbReference type="FunFam" id="3.20.20.140:FF:000008">
    <property type="entry name" value="Probable phosphatase YcdX"/>
    <property type="match status" value="1"/>
</dbReference>
<dbReference type="Gene3D" id="3.20.20.140">
    <property type="entry name" value="Metal-dependent hydrolases"/>
    <property type="match status" value="1"/>
</dbReference>
<dbReference type="HAMAP" id="MF_01561">
    <property type="entry name" value="YcdX_phosphat"/>
    <property type="match status" value="1"/>
</dbReference>
<dbReference type="InterPro" id="IPR023710">
    <property type="entry name" value="Phosphatase_YcdX_put"/>
</dbReference>
<dbReference type="InterPro" id="IPR004013">
    <property type="entry name" value="PHP_dom"/>
</dbReference>
<dbReference type="InterPro" id="IPR050243">
    <property type="entry name" value="PHP_phosphatase"/>
</dbReference>
<dbReference type="InterPro" id="IPR003141">
    <property type="entry name" value="Pol/His_phosphatase_N"/>
</dbReference>
<dbReference type="InterPro" id="IPR016195">
    <property type="entry name" value="Pol/histidinol_Pase-like"/>
</dbReference>
<dbReference type="NCBIfam" id="NF006702">
    <property type="entry name" value="PRK09248.1"/>
    <property type="match status" value="1"/>
</dbReference>
<dbReference type="PANTHER" id="PTHR36928">
    <property type="entry name" value="PHOSPHATASE YCDX-RELATED"/>
    <property type="match status" value="1"/>
</dbReference>
<dbReference type="PANTHER" id="PTHR36928:SF1">
    <property type="entry name" value="PHOSPHATASE YCDX-RELATED"/>
    <property type="match status" value="1"/>
</dbReference>
<dbReference type="Pfam" id="PF02811">
    <property type="entry name" value="PHP"/>
    <property type="match status" value="1"/>
</dbReference>
<dbReference type="SMART" id="SM00481">
    <property type="entry name" value="POLIIIAc"/>
    <property type="match status" value="1"/>
</dbReference>
<dbReference type="SUPFAM" id="SSF89550">
    <property type="entry name" value="PHP domain-like"/>
    <property type="match status" value="1"/>
</dbReference>
<reference key="1">
    <citation type="submission" date="2006-08" db="EMBL/GenBank/DDBJ databases">
        <title>Complete sequence of Shewanella sp. MR-4.</title>
        <authorList>
            <consortium name="US DOE Joint Genome Institute"/>
            <person name="Copeland A."/>
            <person name="Lucas S."/>
            <person name="Lapidus A."/>
            <person name="Barry K."/>
            <person name="Detter J.C."/>
            <person name="Glavina del Rio T."/>
            <person name="Hammon N."/>
            <person name="Israni S."/>
            <person name="Dalin E."/>
            <person name="Tice H."/>
            <person name="Pitluck S."/>
            <person name="Kiss H."/>
            <person name="Brettin T."/>
            <person name="Bruce D."/>
            <person name="Han C."/>
            <person name="Tapia R."/>
            <person name="Gilna P."/>
            <person name="Schmutz J."/>
            <person name="Larimer F."/>
            <person name="Land M."/>
            <person name="Hauser L."/>
            <person name="Kyrpides N."/>
            <person name="Mikhailova N."/>
            <person name="Nealson K."/>
            <person name="Konstantinidis K."/>
            <person name="Klappenbach J."/>
            <person name="Tiedje J."/>
            <person name="Richardson P."/>
        </authorList>
    </citation>
    <scope>NUCLEOTIDE SEQUENCE [LARGE SCALE GENOMIC DNA]</scope>
    <source>
        <strain>MR-4</strain>
    </source>
</reference>
<organism>
    <name type="scientific">Shewanella sp. (strain MR-4)</name>
    <dbReference type="NCBI Taxonomy" id="60480"/>
    <lineage>
        <taxon>Bacteria</taxon>
        <taxon>Pseudomonadati</taxon>
        <taxon>Pseudomonadota</taxon>
        <taxon>Gammaproteobacteria</taxon>
        <taxon>Alteromonadales</taxon>
        <taxon>Shewanellaceae</taxon>
        <taxon>Shewanella</taxon>
    </lineage>
</organism>
<keyword id="KW-0378">Hydrolase</keyword>
<keyword id="KW-0479">Metal-binding</keyword>
<keyword id="KW-0862">Zinc</keyword>
<comment type="cofactor">
    <cofactor evidence="1">
        <name>Zn(2+)</name>
        <dbReference type="ChEBI" id="CHEBI:29105"/>
    </cofactor>
    <text evidence="1">Binds 3 Zn(2+) ions per subunit.</text>
</comment>
<comment type="similarity">
    <text evidence="1">Belongs to the PHP family.</text>
</comment>
<proteinExistence type="inferred from homology"/>
<protein>
    <recommendedName>
        <fullName evidence="1">Probable phosphatase Shewmr4_2619</fullName>
        <ecNumber evidence="1">3.1.3.-</ecNumber>
    </recommendedName>
</protein>
<gene>
    <name type="ordered locus">Shewmr4_2619</name>
</gene>